<feature type="chain" id="PRO_0000344163" description="Urease accessory protein UreF">
    <location>
        <begin position="1"/>
        <end position="223"/>
    </location>
</feature>
<comment type="function">
    <text evidence="1">Required for maturation of urease via the functional incorporation of the urease nickel metallocenter.</text>
</comment>
<comment type="subunit">
    <text evidence="1">UreD, UreF and UreG form a complex that acts as a GTP-hydrolysis-dependent molecular chaperone, activating the urease apoprotein by helping to assemble the nickel containing metallocenter of UreC. The UreE protein probably delivers the nickel.</text>
</comment>
<comment type="subcellular location">
    <subcellularLocation>
        <location evidence="1">Cytoplasm</location>
    </subcellularLocation>
</comment>
<comment type="similarity">
    <text evidence="1">Belongs to the UreF family.</text>
</comment>
<protein>
    <recommendedName>
        <fullName evidence="1">Urease accessory protein UreF</fullName>
    </recommendedName>
</protein>
<name>UREF_RHIEC</name>
<keyword id="KW-0143">Chaperone</keyword>
<keyword id="KW-0963">Cytoplasm</keyword>
<keyword id="KW-0996">Nickel insertion</keyword>
<keyword id="KW-1185">Reference proteome</keyword>
<dbReference type="EMBL" id="CP000133">
    <property type="protein sequence ID" value="ABC92065.1"/>
    <property type="molecule type" value="Genomic_DNA"/>
</dbReference>
<dbReference type="RefSeq" id="WP_011426535.1">
    <property type="nucleotide sequence ID" value="NC_007761.1"/>
</dbReference>
<dbReference type="SMR" id="Q2K521"/>
<dbReference type="KEGG" id="ret:RHE_CH03301"/>
<dbReference type="eggNOG" id="COG0830">
    <property type="taxonomic scope" value="Bacteria"/>
</dbReference>
<dbReference type="HOGENOM" id="CLU_049215_2_0_5"/>
<dbReference type="OrthoDB" id="9798772at2"/>
<dbReference type="Proteomes" id="UP000001936">
    <property type="component" value="Chromosome"/>
</dbReference>
<dbReference type="GO" id="GO:0005737">
    <property type="term" value="C:cytoplasm"/>
    <property type="evidence" value="ECO:0007669"/>
    <property type="project" value="UniProtKB-SubCell"/>
</dbReference>
<dbReference type="GO" id="GO:0016151">
    <property type="term" value="F:nickel cation binding"/>
    <property type="evidence" value="ECO:0007669"/>
    <property type="project" value="UniProtKB-UniRule"/>
</dbReference>
<dbReference type="Gene3D" id="1.10.4190.10">
    <property type="entry name" value="Urease accessory protein UreF"/>
    <property type="match status" value="1"/>
</dbReference>
<dbReference type="HAMAP" id="MF_01385">
    <property type="entry name" value="UreF"/>
    <property type="match status" value="1"/>
</dbReference>
<dbReference type="InterPro" id="IPR002639">
    <property type="entry name" value="UreF"/>
</dbReference>
<dbReference type="InterPro" id="IPR038277">
    <property type="entry name" value="UreF_sf"/>
</dbReference>
<dbReference type="PANTHER" id="PTHR33620">
    <property type="entry name" value="UREASE ACCESSORY PROTEIN F"/>
    <property type="match status" value="1"/>
</dbReference>
<dbReference type="PANTHER" id="PTHR33620:SF1">
    <property type="entry name" value="UREASE ACCESSORY PROTEIN F"/>
    <property type="match status" value="1"/>
</dbReference>
<dbReference type="Pfam" id="PF01730">
    <property type="entry name" value="UreF"/>
    <property type="match status" value="1"/>
</dbReference>
<dbReference type="PIRSF" id="PIRSF009467">
    <property type="entry name" value="Ureas_acces_UreF"/>
    <property type="match status" value="1"/>
</dbReference>
<sequence length="223" mass="23317">MSEDRELQALLRLTAWLSPAFPIGSFAYSGGLERAVADGLVTDAASLANWIGTLIGHGSVWNDAVLLTESHRRQAEAPGLAEIAALAEALAGSRERHQETMLLGEAFLLAARAWPDEVFERLPGKTAYPIAVGAVAGAHGIGPEKVLAVFLHAYASQAVSSGIRLGVAGQKDGVAVLAGLEEQIAGTARRAAASTLDDLGSATVQADIASLRHETQTTRLFRS</sequence>
<evidence type="ECO:0000255" key="1">
    <source>
        <dbReference type="HAMAP-Rule" id="MF_01385"/>
    </source>
</evidence>
<organism>
    <name type="scientific">Rhizobium etli (strain ATCC 51251 / DSM 11541 / JCM 21823 / NBRC 15573 / CFN 42)</name>
    <dbReference type="NCBI Taxonomy" id="347834"/>
    <lineage>
        <taxon>Bacteria</taxon>
        <taxon>Pseudomonadati</taxon>
        <taxon>Pseudomonadota</taxon>
        <taxon>Alphaproteobacteria</taxon>
        <taxon>Hyphomicrobiales</taxon>
        <taxon>Rhizobiaceae</taxon>
        <taxon>Rhizobium/Agrobacterium group</taxon>
        <taxon>Rhizobium</taxon>
    </lineage>
</organism>
<accession>Q2K521</accession>
<gene>
    <name evidence="1" type="primary">ureF</name>
    <name type="ordered locus">RHE_CH03301</name>
</gene>
<reference key="1">
    <citation type="journal article" date="2006" name="Proc. Natl. Acad. Sci. U.S.A.">
        <title>The partitioned Rhizobium etli genome: genetic and metabolic redundancy in seven interacting replicons.</title>
        <authorList>
            <person name="Gonzalez V."/>
            <person name="Santamaria R.I."/>
            <person name="Bustos P."/>
            <person name="Hernandez-Gonzalez I."/>
            <person name="Medrano-Soto A."/>
            <person name="Moreno-Hagelsieb G."/>
            <person name="Janga S.C."/>
            <person name="Ramirez M.A."/>
            <person name="Jimenez-Jacinto V."/>
            <person name="Collado-Vides J."/>
            <person name="Davila G."/>
        </authorList>
    </citation>
    <scope>NUCLEOTIDE SEQUENCE [LARGE SCALE GENOMIC DNA]</scope>
    <source>
        <strain>ATCC 51251 / DSM 11541 / JCM 21823 / NBRC 15573 / CFN 42</strain>
    </source>
</reference>
<proteinExistence type="inferred from homology"/>